<organism>
    <name type="scientific">Schizosaccharomyces pombe (strain 972 / ATCC 24843)</name>
    <name type="common">Fission yeast</name>
    <dbReference type="NCBI Taxonomy" id="284812"/>
    <lineage>
        <taxon>Eukaryota</taxon>
        <taxon>Fungi</taxon>
        <taxon>Dikarya</taxon>
        <taxon>Ascomycota</taxon>
        <taxon>Taphrinomycotina</taxon>
        <taxon>Schizosaccharomycetes</taxon>
        <taxon>Schizosaccharomycetales</taxon>
        <taxon>Schizosaccharomycetaceae</taxon>
        <taxon>Schizosaccharomyces</taxon>
    </lineage>
</organism>
<accession>Q9P7S3</accession>
<proteinExistence type="evidence at protein level"/>
<name>SSR3_SCHPO</name>
<protein>
    <recommendedName>
        <fullName>SWI/SNF and RSC complexes subunit ssr3</fullName>
    </recommendedName>
</protein>
<evidence type="ECO:0000250" key="1"/>
<evidence type="ECO:0000255" key="2">
    <source>
        <dbReference type="PROSITE-ProRule" id="PRU01273"/>
    </source>
</evidence>
<evidence type="ECO:0000256" key="3">
    <source>
        <dbReference type="SAM" id="MobiDB-lite"/>
    </source>
</evidence>
<evidence type="ECO:0000269" key="4">
    <source>
    </source>
</evidence>
<evidence type="ECO:0000269" key="5">
    <source>
    </source>
</evidence>
<evidence type="ECO:0000305" key="6"/>
<sequence>MSNNSRLPENGVQSGNGEDAELKKSMRIIEREIPDSLLEKIPEAEDYIALQDLERKLDSLIVRKRFDLQDSLSRNSHKTRILRMYIHSTVANQSWQQKGENQENNSGDINSLPIPEWTLHIEGRLLVNPDDEDDKAFELAPFTNFFRKIAIQILRSDDLYPSGNYVEWNKLPDNSNTSNGITVTRKGDQSVDVKIMLYPEEHPERYKLSKAFANILGIREGTRPDIVSYLWQYIKFHRLQDMEEKRLINCDKALRDLFEADRLYFPRIPELMNRFLEPIDPIVIPYTINVSEHTVEKVTIFDIRINTEDPRHSQIRSFLATMMSQDKIRSIDDKLTELIQAITYSQSKYDFMKKFSESPIEFINEWIESQSRDLEIVLDGTNMNYAEKRSADYYQQPWVHESAFHYLNLLNSKKQQSVLNASAKK</sequence>
<reference key="1">
    <citation type="journal article" date="2002" name="Nature">
        <title>The genome sequence of Schizosaccharomyces pombe.</title>
        <authorList>
            <person name="Wood V."/>
            <person name="Gwilliam R."/>
            <person name="Rajandream M.A."/>
            <person name="Lyne M.H."/>
            <person name="Lyne R."/>
            <person name="Stewart A."/>
            <person name="Sgouros J.G."/>
            <person name="Peat N."/>
            <person name="Hayles J."/>
            <person name="Baker S.G."/>
            <person name="Basham D."/>
            <person name="Bowman S."/>
            <person name="Brooks K."/>
            <person name="Brown D."/>
            <person name="Brown S."/>
            <person name="Chillingworth T."/>
            <person name="Churcher C.M."/>
            <person name="Collins M."/>
            <person name="Connor R."/>
            <person name="Cronin A."/>
            <person name="Davis P."/>
            <person name="Feltwell T."/>
            <person name="Fraser A."/>
            <person name="Gentles S."/>
            <person name="Goble A."/>
            <person name="Hamlin N."/>
            <person name="Harris D.E."/>
            <person name="Hidalgo J."/>
            <person name="Hodgson G."/>
            <person name="Holroyd S."/>
            <person name="Hornsby T."/>
            <person name="Howarth S."/>
            <person name="Huckle E.J."/>
            <person name="Hunt S."/>
            <person name="Jagels K."/>
            <person name="James K.D."/>
            <person name="Jones L."/>
            <person name="Jones M."/>
            <person name="Leather S."/>
            <person name="McDonald S."/>
            <person name="McLean J."/>
            <person name="Mooney P."/>
            <person name="Moule S."/>
            <person name="Mungall K.L."/>
            <person name="Murphy L.D."/>
            <person name="Niblett D."/>
            <person name="Odell C."/>
            <person name="Oliver K."/>
            <person name="O'Neil S."/>
            <person name="Pearson D."/>
            <person name="Quail M.A."/>
            <person name="Rabbinowitsch E."/>
            <person name="Rutherford K.M."/>
            <person name="Rutter S."/>
            <person name="Saunders D."/>
            <person name="Seeger K."/>
            <person name="Sharp S."/>
            <person name="Skelton J."/>
            <person name="Simmonds M.N."/>
            <person name="Squares R."/>
            <person name="Squares S."/>
            <person name="Stevens K."/>
            <person name="Taylor K."/>
            <person name="Taylor R.G."/>
            <person name="Tivey A."/>
            <person name="Walsh S.V."/>
            <person name="Warren T."/>
            <person name="Whitehead S."/>
            <person name="Woodward J.R."/>
            <person name="Volckaert G."/>
            <person name="Aert R."/>
            <person name="Robben J."/>
            <person name="Grymonprez B."/>
            <person name="Weltjens I."/>
            <person name="Vanstreels E."/>
            <person name="Rieger M."/>
            <person name="Schaefer M."/>
            <person name="Mueller-Auer S."/>
            <person name="Gabel C."/>
            <person name="Fuchs M."/>
            <person name="Duesterhoeft A."/>
            <person name="Fritzc C."/>
            <person name="Holzer E."/>
            <person name="Moestl D."/>
            <person name="Hilbert H."/>
            <person name="Borzym K."/>
            <person name="Langer I."/>
            <person name="Beck A."/>
            <person name="Lehrach H."/>
            <person name="Reinhardt R."/>
            <person name="Pohl T.M."/>
            <person name="Eger P."/>
            <person name="Zimmermann W."/>
            <person name="Wedler H."/>
            <person name="Wambutt R."/>
            <person name="Purnelle B."/>
            <person name="Goffeau A."/>
            <person name="Cadieu E."/>
            <person name="Dreano S."/>
            <person name="Gloux S."/>
            <person name="Lelaure V."/>
            <person name="Mottier S."/>
            <person name="Galibert F."/>
            <person name="Aves S.J."/>
            <person name="Xiang Z."/>
            <person name="Hunt C."/>
            <person name="Moore K."/>
            <person name="Hurst S.M."/>
            <person name="Lucas M."/>
            <person name="Rochet M."/>
            <person name="Gaillardin C."/>
            <person name="Tallada V.A."/>
            <person name="Garzon A."/>
            <person name="Thode G."/>
            <person name="Daga R.R."/>
            <person name="Cruzado L."/>
            <person name="Jimenez J."/>
            <person name="Sanchez M."/>
            <person name="del Rey F."/>
            <person name="Benito J."/>
            <person name="Dominguez A."/>
            <person name="Revuelta J.L."/>
            <person name="Moreno S."/>
            <person name="Armstrong J."/>
            <person name="Forsburg S.L."/>
            <person name="Cerutti L."/>
            <person name="Lowe T."/>
            <person name="McCombie W.R."/>
            <person name="Paulsen I."/>
            <person name="Potashkin J."/>
            <person name="Shpakovski G.V."/>
            <person name="Ussery D."/>
            <person name="Barrell B.G."/>
            <person name="Nurse P."/>
        </authorList>
    </citation>
    <scope>NUCLEOTIDE SEQUENCE [LARGE SCALE GENOMIC DNA]</scope>
    <source>
        <strain>972 / ATCC 24843</strain>
    </source>
</reference>
<reference key="2">
    <citation type="journal article" date="2006" name="Nat. Biotechnol.">
        <title>ORFeome cloning and global analysis of protein localization in the fission yeast Schizosaccharomyces pombe.</title>
        <authorList>
            <person name="Matsuyama A."/>
            <person name="Arai R."/>
            <person name="Yashiroda Y."/>
            <person name="Shirai A."/>
            <person name="Kamata A."/>
            <person name="Sekido S."/>
            <person name="Kobayashi Y."/>
            <person name="Hashimoto A."/>
            <person name="Hamamoto M."/>
            <person name="Hiraoka Y."/>
            <person name="Horinouchi S."/>
            <person name="Yoshida M."/>
        </authorList>
    </citation>
    <scope>SUBCELLULAR LOCATION [LARGE SCALE ANALYSIS]</scope>
</reference>
<reference key="3">
    <citation type="journal article" date="2008" name="Nat. Struct. Mol. Biol.">
        <title>Fission yeast SWI/SNF and RSC complexes show compositional and functional differences from budding yeast.</title>
        <authorList>
            <person name="Monahan B.J."/>
            <person name="Villen J."/>
            <person name="Marguerat S."/>
            <person name="Baehler J."/>
            <person name="Gygi S.P."/>
            <person name="Winston F."/>
        </authorList>
    </citation>
    <scope>IDENTIFICATION IN THE SWI/SNF AND RSC COMPLEXES</scope>
    <scope>FUNCTION OF THE SWI/SNF AND RSC COMPLEXES</scope>
    <scope>IDENTIFICATION BY MASS SPECTROMETRY</scope>
</reference>
<comment type="function">
    <text evidence="5">Component of the chromatin structure remodeling complex (RSC), which is involved in transcription regulation and nucleosome positioning. Controls particularly membrane and organelle development genes. Part of the SWI/SNF complex, an ATP-dependent chromatin remodeling complex, required for the positive and negative regulation of gene expression of a large number of genes. It changes chromatin structure by altering DNA-histone contacts within a nucleosome, leading eventually to a change in nucleosome position, thus facilitating or repressing binding of gene-specific transcription factors.</text>
</comment>
<comment type="subunit">
    <text evidence="1 5">Component of the RSC complex composed of at least arp9, arp42, rsc1, rsc4, rsc7, rsc9, rsc58, sfh1, snf21, ssr1, ssr2, ssr3 and ssr4. The complex interacts with histone and histone variant components of centromeric chromatin (By similarity). Component of the SWI/SNF global transcription activator complex composed of at least arp9, arp42, snf5, snf22, snf30, sbf59, sol1, ssr1, ssr2, ssr3, ssr4 and tfg3.</text>
</comment>
<comment type="subcellular location">
    <subcellularLocation>
        <location evidence="4">Cytoplasm</location>
    </subcellularLocation>
    <subcellularLocation>
        <location evidence="4">Nucleus</location>
    </subcellularLocation>
</comment>
<comment type="similarity">
    <text evidence="6">Belongs to the SMARCD family.</text>
</comment>
<feature type="chain" id="PRO_0000317337" description="SWI/SNF and RSC complexes subunit ssr3">
    <location>
        <begin position="1"/>
        <end position="425"/>
    </location>
</feature>
<feature type="domain" description="SWIB/MDM2" evidence="2">
    <location>
        <begin position="201"/>
        <end position="278"/>
    </location>
</feature>
<feature type="region of interest" description="Disordered" evidence="3">
    <location>
        <begin position="1"/>
        <end position="23"/>
    </location>
</feature>
<feature type="compositionally biased region" description="Polar residues" evidence="3">
    <location>
        <begin position="1"/>
        <end position="16"/>
    </location>
</feature>
<gene>
    <name type="primary">ssr3</name>
    <name type="ORF">SPAC23G3.10c</name>
</gene>
<dbReference type="EMBL" id="CU329670">
    <property type="protein sequence ID" value="CAB72235.1"/>
    <property type="molecule type" value="Genomic_DNA"/>
</dbReference>
<dbReference type="PIR" id="T50184">
    <property type="entry name" value="T50184"/>
</dbReference>
<dbReference type="RefSeq" id="NP_593110.1">
    <property type="nucleotide sequence ID" value="NM_001018507.2"/>
</dbReference>
<dbReference type="SMR" id="Q9P7S3"/>
<dbReference type="BioGRID" id="277943">
    <property type="interactions" value="51"/>
</dbReference>
<dbReference type="ComplexPortal" id="CPX-6362">
    <property type="entry name" value="SWI/SNF chromatin remodelling complex"/>
</dbReference>
<dbReference type="ComplexPortal" id="CPX-6363">
    <property type="entry name" value="RSC chromatin remodelling complex"/>
</dbReference>
<dbReference type="DIP" id="DIP-48385N"/>
<dbReference type="FunCoup" id="Q9P7S3">
    <property type="interactions" value="680"/>
</dbReference>
<dbReference type="IntAct" id="Q9P7S3">
    <property type="interactions" value="10"/>
</dbReference>
<dbReference type="STRING" id="284812.Q9P7S3"/>
<dbReference type="iPTMnet" id="Q9P7S3"/>
<dbReference type="PaxDb" id="4896-SPAC23G3.10c.1"/>
<dbReference type="EnsemblFungi" id="SPAC23G3.10c.1">
    <property type="protein sequence ID" value="SPAC23G3.10c.1:pep"/>
    <property type="gene ID" value="SPAC23G3.10c"/>
</dbReference>
<dbReference type="GeneID" id="2541438"/>
<dbReference type="KEGG" id="spo:2541438"/>
<dbReference type="PomBase" id="SPAC23G3.10c">
    <property type="gene designation" value="ssr3"/>
</dbReference>
<dbReference type="VEuPathDB" id="FungiDB:SPAC23G3.10c"/>
<dbReference type="eggNOG" id="KOG2570">
    <property type="taxonomic scope" value="Eukaryota"/>
</dbReference>
<dbReference type="HOGENOM" id="CLU_023529_2_1_1"/>
<dbReference type="InParanoid" id="Q9P7S3"/>
<dbReference type="OMA" id="NFRCNEP"/>
<dbReference type="PhylomeDB" id="Q9P7S3"/>
<dbReference type="Reactome" id="R-SPO-3214858">
    <property type="pathway name" value="RMTs methylate histone arginines"/>
</dbReference>
<dbReference type="PRO" id="PR:Q9P7S3"/>
<dbReference type="Proteomes" id="UP000002485">
    <property type="component" value="Chromosome I"/>
</dbReference>
<dbReference type="GO" id="GO:0000785">
    <property type="term" value="C:chromatin"/>
    <property type="evidence" value="ECO:0000303"/>
    <property type="project" value="ComplexPortal"/>
</dbReference>
<dbReference type="GO" id="GO:0005829">
    <property type="term" value="C:cytosol"/>
    <property type="evidence" value="ECO:0007005"/>
    <property type="project" value="PomBase"/>
</dbReference>
<dbReference type="GO" id="GO:0005634">
    <property type="term" value="C:nucleus"/>
    <property type="evidence" value="ECO:0007005"/>
    <property type="project" value="PomBase"/>
</dbReference>
<dbReference type="GO" id="GO:0016586">
    <property type="term" value="C:RSC-type complex"/>
    <property type="evidence" value="ECO:0000314"/>
    <property type="project" value="PomBase"/>
</dbReference>
<dbReference type="GO" id="GO:0016514">
    <property type="term" value="C:SWI/SNF complex"/>
    <property type="evidence" value="ECO:0000314"/>
    <property type="project" value="PomBase"/>
</dbReference>
<dbReference type="GO" id="GO:0006338">
    <property type="term" value="P:chromatin remodeling"/>
    <property type="evidence" value="ECO:0000303"/>
    <property type="project" value="ComplexPortal"/>
</dbReference>
<dbReference type="GO" id="GO:0006357">
    <property type="term" value="P:regulation of transcription by RNA polymerase II"/>
    <property type="evidence" value="ECO:0000318"/>
    <property type="project" value="GO_Central"/>
</dbReference>
<dbReference type="GO" id="GO:0045815">
    <property type="term" value="P:transcription initiation-coupled chromatin remodeling"/>
    <property type="evidence" value="ECO:0000305"/>
    <property type="project" value="PomBase"/>
</dbReference>
<dbReference type="CDD" id="cd10568">
    <property type="entry name" value="SWIB_like"/>
    <property type="match status" value="1"/>
</dbReference>
<dbReference type="Gene3D" id="1.10.245.10">
    <property type="entry name" value="SWIB/MDM2 domain"/>
    <property type="match status" value="1"/>
</dbReference>
<dbReference type="InterPro" id="IPR019835">
    <property type="entry name" value="SWIB_domain"/>
</dbReference>
<dbReference type="InterPro" id="IPR036885">
    <property type="entry name" value="SWIB_MDM2_dom_sf"/>
</dbReference>
<dbReference type="InterPro" id="IPR003121">
    <property type="entry name" value="SWIB_MDM2_domain"/>
</dbReference>
<dbReference type="PANTHER" id="PTHR13844">
    <property type="entry name" value="SWI/SNF-RELATED MATRIX-ASSOCIATED ACTIN-DEPENDENT REGULATOR OF CHROMATIN SUBFAMILY D"/>
    <property type="match status" value="1"/>
</dbReference>
<dbReference type="Pfam" id="PF02201">
    <property type="entry name" value="SWIB"/>
    <property type="match status" value="1"/>
</dbReference>
<dbReference type="SMART" id="SM00151">
    <property type="entry name" value="SWIB"/>
    <property type="match status" value="1"/>
</dbReference>
<dbReference type="SUPFAM" id="SSF47592">
    <property type="entry name" value="SWIB/MDM2 domain"/>
    <property type="match status" value="1"/>
</dbReference>
<dbReference type="PROSITE" id="PS51925">
    <property type="entry name" value="SWIB_MDM2"/>
    <property type="match status" value="1"/>
</dbReference>
<keyword id="KW-0156">Chromatin regulator</keyword>
<keyword id="KW-0963">Cytoplasm</keyword>
<keyword id="KW-0539">Nucleus</keyword>
<keyword id="KW-1185">Reference proteome</keyword>
<keyword id="KW-0804">Transcription</keyword>
<keyword id="KW-0805">Transcription regulation</keyword>